<sequence>MAEYKNYTLNFGPVHPAAHGVLRLILELDGENVVRADPHVGLLHRGTEKLAEFKPYNQSIGYMDRLDYVSMMCNEHAYVMAIEKLLQLEVPERAKYIRVMFAEMTRILNHLLWVAACGIDLGAMTVFLYAFRVREDLFDCYEAVSGARMHAAYFRPGGVARDLPTQMPQYQKTRFTSKRKAKKLNEPRQGSMLDFLDHFVVDFEKSLDEIDTLLTDNRLWKQRTVDIGTVTAERAKELGFTGPMLRGSGVAWDLRKTQPYEVYHKLEFDIPIGANGDCYDRYLVRMAEMRESNKLIKQCVDWLRANPGSVLSDNHKVAPPKRNAMKNNMEELIHHFKLFSEGYCTTEGEVYVGTEHPKGEFGVYIKSDGANKPYRLKMRAPGFAHISAMDELLSGHMLADTPAIISTIDVVFGDVDR</sequence>
<feature type="chain" id="PRO_0000371866" description="NADH-quinone oxidoreductase subunit D">
    <location>
        <begin position="1"/>
        <end position="417"/>
    </location>
</feature>
<name>NUOD_FRATH</name>
<proteinExistence type="inferred from homology"/>
<accession>Q2A1F3</accession>
<comment type="function">
    <text evidence="1">NDH-1 shuttles electrons from NADH, via FMN and iron-sulfur (Fe-S) centers, to quinones in the respiratory chain. The immediate electron acceptor for the enzyme in this species is believed to be ubiquinone. Couples the redox reaction to proton translocation (for every two electrons transferred, four hydrogen ions are translocated across the cytoplasmic membrane), and thus conserves the redox energy in a proton gradient.</text>
</comment>
<comment type="catalytic activity">
    <reaction evidence="1">
        <text>a quinone + NADH + 5 H(+)(in) = a quinol + NAD(+) + 4 H(+)(out)</text>
        <dbReference type="Rhea" id="RHEA:57888"/>
        <dbReference type="ChEBI" id="CHEBI:15378"/>
        <dbReference type="ChEBI" id="CHEBI:24646"/>
        <dbReference type="ChEBI" id="CHEBI:57540"/>
        <dbReference type="ChEBI" id="CHEBI:57945"/>
        <dbReference type="ChEBI" id="CHEBI:132124"/>
    </reaction>
</comment>
<comment type="subunit">
    <text evidence="1">NDH-1 is composed of 14 different subunits. Subunits NuoB, C, D, E, F, and G constitute the peripheral sector of the complex.</text>
</comment>
<comment type="subcellular location">
    <subcellularLocation>
        <location evidence="1">Cell inner membrane</location>
        <topology evidence="1">Peripheral membrane protein</topology>
        <orientation evidence="1">Cytoplasmic side</orientation>
    </subcellularLocation>
</comment>
<comment type="similarity">
    <text evidence="1">Belongs to the complex I 49 kDa subunit family.</text>
</comment>
<reference key="1">
    <citation type="submission" date="2006-03" db="EMBL/GenBank/DDBJ databases">
        <title>Complete genome sequence of Francisella tularensis LVS (Live Vaccine Strain).</title>
        <authorList>
            <person name="Chain P."/>
            <person name="Larimer F."/>
            <person name="Land M."/>
            <person name="Stilwagen S."/>
            <person name="Larsson P."/>
            <person name="Bearden S."/>
            <person name="Chu M."/>
            <person name="Oyston P."/>
            <person name="Forsman M."/>
            <person name="Andersson S."/>
            <person name="Lindler L."/>
            <person name="Titball R."/>
            <person name="Garcia E."/>
        </authorList>
    </citation>
    <scope>NUCLEOTIDE SEQUENCE [LARGE SCALE GENOMIC DNA]</scope>
    <source>
        <strain>LVS</strain>
    </source>
</reference>
<keyword id="KW-0997">Cell inner membrane</keyword>
<keyword id="KW-1003">Cell membrane</keyword>
<keyword id="KW-0472">Membrane</keyword>
<keyword id="KW-0520">NAD</keyword>
<keyword id="KW-0874">Quinone</keyword>
<keyword id="KW-1185">Reference proteome</keyword>
<keyword id="KW-1278">Translocase</keyword>
<keyword id="KW-0813">Transport</keyword>
<keyword id="KW-0830">Ubiquinone</keyword>
<evidence type="ECO:0000255" key="1">
    <source>
        <dbReference type="HAMAP-Rule" id="MF_01358"/>
    </source>
</evidence>
<gene>
    <name evidence="1" type="primary">nuoD</name>
    <name type="ordered locus">FTL_1827</name>
</gene>
<organism>
    <name type="scientific">Francisella tularensis subsp. holarctica (strain LVS)</name>
    <dbReference type="NCBI Taxonomy" id="376619"/>
    <lineage>
        <taxon>Bacteria</taxon>
        <taxon>Pseudomonadati</taxon>
        <taxon>Pseudomonadota</taxon>
        <taxon>Gammaproteobacteria</taxon>
        <taxon>Thiotrichales</taxon>
        <taxon>Francisellaceae</taxon>
        <taxon>Francisella</taxon>
    </lineage>
</organism>
<dbReference type="EC" id="7.1.1.-" evidence="1"/>
<dbReference type="EMBL" id="AM233362">
    <property type="protein sequence ID" value="CAJ80266.1"/>
    <property type="molecule type" value="Genomic_DNA"/>
</dbReference>
<dbReference type="RefSeq" id="WP_003017384.1">
    <property type="nucleotide sequence ID" value="NZ_CP009694.1"/>
</dbReference>
<dbReference type="SMR" id="Q2A1F3"/>
<dbReference type="KEGG" id="ftl:FTL_1827"/>
<dbReference type="Proteomes" id="UP000001944">
    <property type="component" value="Chromosome"/>
</dbReference>
<dbReference type="GO" id="GO:0005886">
    <property type="term" value="C:plasma membrane"/>
    <property type="evidence" value="ECO:0007669"/>
    <property type="project" value="UniProtKB-SubCell"/>
</dbReference>
<dbReference type="GO" id="GO:0051287">
    <property type="term" value="F:NAD binding"/>
    <property type="evidence" value="ECO:0007669"/>
    <property type="project" value="InterPro"/>
</dbReference>
<dbReference type="GO" id="GO:0050136">
    <property type="term" value="F:NADH:ubiquinone reductase (non-electrogenic) activity"/>
    <property type="evidence" value="ECO:0007669"/>
    <property type="project" value="UniProtKB-UniRule"/>
</dbReference>
<dbReference type="GO" id="GO:0048038">
    <property type="term" value="F:quinone binding"/>
    <property type="evidence" value="ECO:0007669"/>
    <property type="project" value="UniProtKB-KW"/>
</dbReference>
<dbReference type="FunFam" id="1.10.645.10:FF:000005">
    <property type="entry name" value="NADH-quinone oxidoreductase subunit D"/>
    <property type="match status" value="1"/>
</dbReference>
<dbReference type="Gene3D" id="1.10.645.10">
    <property type="entry name" value="Cytochrome-c3 Hydrogenase, chain B"/>
    <property type="match status" value="1"/>
</dbReference>
<dbReference type="HAMAP" id="MF_01358">
    <property type="entry name" value="NDH1_NuoD"/>
    <property type="match status" value="1"/>
</dbReference>
<dbReference type="InterPro" id="IPR001135">
    <property type="entry name" value="NADH_Q_OxRdtase_suD"/>
</dbReference>
<dbReference type="InterPro" id="IPR014029">
    <property type="entry name" value="NADH_UbQ_OxRdtase_49kDa_CS"/>
</dbReference>
<dbReference type="InterPro" id="IPR022885">
    <property type="entry name" value="NDH1_su_D/H"/>
</dbReference>
<dbReference type="InterPro" id="IPR029014">
    <property type="entry name" value="NiFe-Hase_large"/>
</dbReference>
<dbReference type="NCBIfam" id="TIGR01962">
    <property type="entry name" value="NuoD"/>
    <property type="match status" value="1"/>
</dbReference>
<dbReference type="NCBIfam" id="NF004739">
    <property type="entry name" value="PRK06075.1"/>
    <property type="match status" value="1"/>
</dbReference>
<dbReference type="PANTHER" id="PTHR11993:SF10">
    <property type="entry name" value="NADH DEHYDROGENASE [UBIQUINONE] IRON-SULFUR PROTEIN 2, MITOCHONDRIAL"/>
    <property type="match status" value="1"/>
</dbReference>
<dbReference type="PANTHER" id="PTHR11993">
    <property type="entry name" value="NADH-UBIQUINONE OXIDOREDUCTASE 49 KDA SUBUNIT"/>
    <property type="match status" value="1"/>
</dbReference>
<dbReference type="Pfam" id="PF00346">
    <property type="entry name" value="Complex1_49kDa"/>
    <property type="match status" value="1"/>
</dbReference>
<dbReference type="SUPFAM" id="SSF56762">
    <property type="entry name" value="HydB/Nqo4-like"/>
    <property type="match status" value="1"/>
</dbReference>
<dbReference type="PROSITE" id="PS00535">
    <property type="entry name" value="COMPLEX1_49K"/>
    <property type="match status" value="1"/>
</dbReference>
<protein>
    <recommendedName>
        <fullName evidence="1">NADH-quinone oxidoreductase subunit D</fullName>
        <ecNumber evidence="1">7.1.1.-</ecNumber>
    </recommendedName>
    <alternativeName>
        <fullName evidence="1">NADH dehydrogenase I subunit D</fullName>
    </alternativeName>
    <alternativeName>
        <fullName evidence="1">NDH-1 subunit D</fullName>
    </alternativeName>
</protein>